<proteinExistence type="predicted"/>
<protein>
    <recommendedName>
        <fullName>22 kDa relaxation protein</fullName>
    </recommendedName>
</protein>
<reference key="1">
    <citation type="journal article" date="1984" name="Nucleic Acids Res.">
        <title>Complete sequence of pSC101.</title>
        <authorList>
            <person name="Bernardi A."/>
            <person name="Bernardi F."/>
        </authorList>
    </citation>
    <scope>NUCLEOTIDE SEQUENCE [GENOMIC DNA]</scope>
</reference>
<sequence length="194" mass="21886">MSDEIKQIAALIGHHQALEKRVTSLTEQFQAASSQLQQQSETLSRVIRELDSASGNMTDTVRKSVSSALTQVEKELKQAGLAQQKPATEALNQAADTAKAMIHEMRREMSRYTWKSAIYLVLTIFFVLASCVTAFTWFMNDGYSQIAEMQRMEAVWQKKAPLADISRCDGKPCVKVDTRTTYGDKENTWMIIKK</sequence>
<name>RLX2_SALTM</name>
<geneLocation type="plasmid">
    <name>pSC101</name>
</geneLocation>
<feature type="chain" id="PRO_0000068438" description="22 kDa relaxation protein">
    <location>
        <begin position="1"/>
        <end position="194"/>
    </location>
</feature>
<accession>P14493</accession>
<organism>
    <name type="scientific">Salmonella typhimurium</name>
    <dbReference type="NCBI Taxonomy" id="90371"/>
    <lineage>
        <taxon>Bacteria</taxon>
        <taxon>Pseudomonadati</taxon>
        <taxon>Pseudomonadota</taxon>
        <taxon>Gammaproteobacteria</taxon>
        <taxon>Enterobacterales</taxon>
        <taxon>Enterobacteriaceae</taxon>
        <taxon>Salmonella</taxon>
    </lineage>
</organism>
<keyword id="KW-0614">Plasmid</keyword>
<comment type="function">
    <text>This protein is probably required for relaxation complex formation.</text>
</comment>
<dbReference type="EMBL" id="X01654">
    <property type="protein sequence ID" value="CAA25819.1"/>
    <property type="molecule type" value="Genomic_DNA"/>
</dbReference>
<dbReference type="PIR" id="S28092">
    <property type="entry name" value="S28092"/>
</dbReference>
<dbReference type="RefSeq" id="NP_044283.1">
    <property type="nucleotide sequence ID" value="NC_002056.1"/>
</dbReference>
<dbReference type="RefSeq" id="WP_010891053.1">
    <property type="nucleotide sequence ID" value="NC_002056.1"/>
</dbReference>
<dbReference type="SMR" id="P14493"/>
<dbReference type="GeneID" id="64209532"/>